<protein>
    <recommendedName>
        <fullName evidence="1">Chaperonin GroEL</fullName>
        <ecNumber evidence="1">5.6.1.7</ecNumber>
    </recommendedName>
    <alternativeName>
        <fullName evidence="1">60 kDa chaperonin</fullName>
    </alternativeName>
    <alternativeName>
        <fullName evidence="1">Chaperonin-60</fullName>
        <shortName evidence="1">Cpn60</shortName>
    </alternativeName>
</protein>
<name>CH60_PARTM</name>
<organism>
    <name type="scientific">Parageobacillus thermoglucosidasius</name>
    <name type="common">Geobacillus thermoglucosidasius</name>
    <dbReference type="NCBI Taxonomy" id="1426"/>
    <lineage>
        <taxon>Bacteria</taxon>
        <taxon>Bacillati</taxon>
        <taxon>Bacillota</taxon>
        <taxon>Bacilli</taxon>
        <taxon>Bacillales</taxon>
        <taxon>Anoxybacillaceae</taxon>
        <taxon>Parageobacillus</taxon>
    </lineage>
</organism>
<accession>Q8VV84</accession>
<gene>
    <name evidence="1" type="primary">groEL</name>
    <name evidence="1" type="synonym">groL</name>
</gene>
<feature type="chain" id="PRO_0000063281" description="Chaperonin GroEL">
    <location>
        <begin position="1"/>
        <end position="539"/>
    </location>
</feature>
<feature type="binding site" evidence="1">
    <location>
        <begin position="29"/>
        <end position="32"/>
    </location>
    <ligand>
        <name>ATP</name>
        <dbReference type="ChEBI" id="CHEBI:30616"/>
    </ligand>
</feature>
<feature type="binding site" evidence="1">
    <location>
        <begin position="86"/>
        <end position="90"/>
    </location>
    <ligand>
        <name>ATP</name>
        <dbReference type="ChEBI" id="CHEBI:30616"/>
    </ligand>
</feature>
<feature type="binding site" evidence="1">
    <location>
        <position position="413"/>
    </location>
    <ligand>
        <name>ATP</name>
        <dbReference type="ChEBI" id="CHEBI:30616"/>
    </ligand>
</feature>
<feature type="binding site" evidence="1">
    <location>
        <begin position="476"/>
        <end position="478"/>
    </location>
    <ligand>
        <name>ATP</name>
        <dbReference type="ChEBI" id="CHEBI:30616"/>
    </ligand>
</feature>
<feature type="binding site" evidence="1">
    <location>
        <position position="492"/>
    </location>
    <ligand>
        <name>ATP</name>
        <dbReference type="ChEBI" id="CHEBI:30616"/>
    </ligand>
</feature>
<reference key="1">
    <citation type="journal article" date="2002" name="Biotechnol. Appl. Biochem.">
        <title>Oligo-1,6-glucosidase from a thermophile, Bacillus thermoglucosidasius KP1006, was efficiently produced by combinatorial expression of GroEL in Escherichia coli.</title>
        <authorList>
            <person name="Watanabe K."/>
            <person name="Fujiwara H."/>
            <person name="Inui K."/>
            <person name="Suzuki Y."/>
        </authorList>
    </citation>
    <scope>NUCLEOTIDE SEQUENCE [GENOMIC DNA]</scope>
    <source>
        <strain>ATCC 43742 / DSM 2542 / NCIMB 11955 / NRRL B-14516 / KP 1006</strain>
    </source>
</reference>
<keyword id="KW-0067">ATP-binding</keyword>
<keyword id="KW-0143">Chaperone</keyword>
<keyword id="KW-0963">Cytoplasm</keyword>
<keyword id="KW-0413">Isomerase</keyword>
<keyword id="KW-0547">Nucleotide-binding</keyword>
<dbReference type="EC" id="5.6.1.7" evidence="1"/>
<dbReference type="EMBL" id="AB025944">
    <property type="protein sequence ID" value="BAB83940.1"/>
    <property type="molecule type" value="Genomic_DNA"/>
</dbReference>
<dbReference type="SMR" id="Q8VV84"/>
<dbReference type="STRING" id="1426.AOT13_04590"/>
<dbReference type="eggNOG" id="COG0459">
    <property type="taxonomic scope" value="Bacteria"/>
</dbReference>
<dbReference type="GO" id="GO:0005737">
    <property type="term" value="C:cytoplasm"/>
    <property type="evidence" value="ECO:0007669"/>
    <property type="project" value="UniProtKB-SubCell"/>
</dbReference>
<dbReference type="GO" id="GO:0005524">
    <property type="term" value="F:ATP binding"/>
    <property type="evidence" value="ECO:0007669"/>
    <property type="project" value="UniProtKB-UniRule"/>
</dbReference>
<dbReference type="GO" id="GO:0140662">
    <property type="term" value="F:ATP-dependent protein folding chaperone"/>
    <property type="evidence" value="ECO:0007669"/>
    <property type="project" value="InterPro"/>
</dbReference>
<dbReference type="GO" id="GO:0016853">
    <property type="term" value="F:isomerase activity"/>
    <property type="evidence" value="ECO:0007669"/>
    <property type="project" value="UniProtKB-KW"/>
</dbReference>
<dbReference type="GO" id="GO:0051082">
    <property type="term" value="F:unfolded protein binding"/>
    <property type="evidence" value="ECO:0007669"/>
    <property type="project" value="UniProtKB-UniRule"/>
</dbReference>
<dbReference type="GO" id="GO:0042026">
    <property type="term" value="P:protein refolding"/>
    <property type="evidence" value="ECO:0007669"/>
    <property type="project" value="UniProtKB-UniRule"/>
</dbReference>
<dbReference type="CDD" id="cd03344">
    <property type="entry name" value="GroEL"/>
    <property type="match status" value="1"/>
</dbReference>
<dbReference type="FunFam" id="1.10.560.10:FF:000001">
    <property type="entry name" value="60 kDa chaperonin"/>
    <property type="match status" value="1"/>
</dbReference>
<dbReference type="FunFam" id="3.50.7.10:FF:000001">
    <property type="entry name" value="60 kDa chaperonin"/>
    <property type="match status" value="1"/>
</dbReference>
<dbReference type="Gene3D" id="3.50.7.10">
    <property type="entry name" value="GroEL"/>
    <property type="match status" value="1"/>
</dbReference>
<dbReference type="Gene3D" id="1.10.560.10">
    <property type="entry name" value="GroEL-like equatorial domain"/>
    <property type="match status" value="1"/>
</dbReference>
<dbReference type="Gene3D" id="3.30.260.10">
    <property type="entry name" value="TCP-1-like chaperonin intermediate domain"/>
    <property type="match status" value="1"/>
</dbReference>
<dbReference type="HAMAP" id="MF_00600">
    <property type="entry name" value="CH60"/>
    <property type="match status" value="1"/>
</dbReference>
<dbReference type="InterPro" id="IPR018370">
    <property type="entry name" value="Chaperonin_Cpn60_CS"/>
</dbReference>
<dbReference type="InterPro" id="IPR001844">
    <property type="entry name" value="Cpn60/GroEL"/>
</dbReference>
<dbReference type="InterPro" id="IPR002423">
    <property type="entry name" value="Cpn60/GroEL/TCP-1"/>
</dbReference>
<dbReference type="InterPro" id="IPR027409">
    <property type="entry name" value="GroEL-like_apical_dom_sf"/>
</dbReference>
<dbReference type="InterPro" id="IPR027413">
    <property type="entry name" value="GROEL-like_equatorial_sf"/>
</dbReference>
<dbReference type="InterPro" id="IPR027410">
    <property type="entry name" value="TCP-1-like_intermed_sf"/>
</dbReference>
<dbReference type="NCBIfam" id="TIGR02348">
    <property type="entry name" value="GroEL"/>
    <property type="match status" value="1"/>
</dbReference>
<dbReference type="NCBIfam" id="NF000592">
    <property type="entry name" value="PRK00013.1"/>
    <property type="match status" value="1"/>
</dbReference>
<dbReference type="NCBIfam" id="NF009487">
    <property type="entry name" value="PRK12849.1"/>
    <property type="match status" value="1"/>
</dbReference>
<dbReference type="NCBIfam" id="NF009488">
    <property type="entry name" value="PRK12850.1"/>
    <property type="match status" value="1"/>
</dbReference>
<dbReference type="NCBIfam" id="NF009489">
    <property type="entry name" value="PRK12851.1"/>
    <property type="match status" value="1"/>
</dbReference>
<dbReference type="PANTHER" id="PTHR45633">
    <property type="entry name" value="60 KDA HEAT SHOCK PROTEIN, MITOCHONDRIAL"/>
    <property type="match status" value="1"/>
</dbReference>
<dbReference type="Pfam" id="PF00118">
    <property type="entry name" value="Cpn60_TCP1"/>
    <property type="match status" value="1"/>
</dbReference>
<dbReference type="PRINTS" id="PR00298">
    <property type="entry name" value="CHAPERONIN60"/>
</dbReference>
<dbReference type="SUPFAM" id="SSF52029">
    <property type="entry name" value="GroEL apical domain-like"/>
    <property type="match status" value="1"/>
</dbReference>
<dbReference type="SUPFAM" id="SSF48592">
    <property type="entry name" value="GroEL equatorial domain-like"/>
    <property type="match status" value="1"/>
</dbReference>
<dbReference type="SUPFAM" id="SSF54849">
    <property type="entry name" value="GroEL-intermediate domain like"/>
    <property type="match status" value="1"/>
</dbReference>
<dbReference type="PROSITE" id="PS00296">
    <property type="entry name" value="CHAPERONINS_CPN60"/>
    <property type="match status" value="1"/>
</dbReference>
<comment type="function">
    <text evidence="1">Together with its co-chaperonin GroES, plays an essential role in assisting protein folding. The GroEL-GroES system forms a nano-cage that allows encapsulation of the non-native substrate proteins and provides a physical environment optimized to promote and accelerate protein folding.</text>
</comment>
<comment type="catalytic activity">
    <reaction evidence="1">
        <text>ATP + H2O + a folded polypeptide = ADP + phosphate + an unfolded polypeptide.</text>
        <dbReference type="EC" id="5.6.1.7"/>
    </reaction>
</comment>
<comment type="subunit">
    <text evidence="1">Forms a cylinder of 14 subunits composed of two heptameric rings stacked back-to-back. Interacts with the co-chaperonin GroES.</text>
</comment>
<comment type="subcellular location">
    <subcellularLocation>
        <location evidence="1">Cytoplasm</location>
    </subcellularLocation>
</comment>
<comment type="similarity">
    <text evidence="1">Belongs to the chaperonin (HSP60) family.</text>
</comment>
<sequence>MAKEIKFSEEARRAMLRGVDKLADAVKVTLGPKGRNVVLEKKFGSPLITNDGVTIAKEIELEDPFENMGAKLVAEVASKTNDVAGDGTTTATVLAQAMIREGLKNVTAGANPMGIRKGIEKAVAVAVEELKAISKPIQGKESIAQVAAISAADEEVGQLIAEAMERVGNDGVITLEESKGFTTELDVVEGMQFDRGYASPYMITDTEKMEAVLENPYILITDKKISNIQDILPILEQVVQQGKPLLIIAEDVEGEALATLVVNKLRGTFTAVAVKAPGFGDRRKAMLEDIAILTGGEVISEELGRELKSTTIASLGRASKVVVTKENTTIVEGAGDSERIKARINQIRAQLEETTSEFDRGKLQERLAKLAGGVAVIKVGAATETELKERKLRIEDALNSTRAAVEEGIVAGGGTALMNVYNKVAAIEAEGDEATGVKIVLRAIEEPVRQIAQNAGLEGSVIVERLKSEKPGIGFNAATGEWVNMIEAGIVDPTKVTRSALQNAASVAAMFLTTEAVVADKPEENKGGNSGMPDMGGMM</sequence>
<proteinExistence type="inferred from homology"/>
<evidence type="ECO:0000255" key="1">
    <source>
        <dbReference type="HAMAP-Rule" id="MF_00600"/>
    </source>
</evidence>